<reference key="1">
    <citation type="submission" date="2003-06" db="EMBL/GenBank/DDBJ databases">
        <title>The complete genome sequence of Haemophilus ducreyi.</title>
        <authorList>
            <person name="Munson R.S. Jr."/>
            <person name="Ray W.C."/>
            <person name="Mahairas G."/>
            <person name="Sabo P."/>
            <person name="Mungur R."/>
            <person name="Johnson L."/>
            <person name="Nguyen D."/>
            <person name="Wang J."/>
            <person name="Forst C."/>
            <person name="Hood L."/>
        </authorList>
    </citation>
    <scope>NUCLEOTIDE SEQUENCE [LARGE SCALE GENOMIC DNA]</scope>
    <source>
        <strain>35000HP / ATCC 700724</strain>
    </source>
</reference>
<gene>
    <name evidence="1" type="primary">tyrS</name>
    <name type="ordered locus">HD_0693</name>
</gene>
<accession>Q7VN81</accession>
<protein>
    <recommendedName>
        <fullName evidence="1">Tyrosine--tRNA ligase</fullName>
        <ecNumber evidence="1">6.1.1.1</ecNumber>
    </recommendedName>
    <alternativeName>
        <fullName evidence="1">Tyrosyl-tRNA synthetase</fullName>
        <shortName evidence="1">TyrRS</shortName>
    </alternativeName>
</protein>
<proteinExistence type="inferred from homology"/>
<comment type="function">
    <text evidence="1">Catalyzes the attachment of tyrosine to tRNA(Tyr) in a two-step reaction: tyrosine is first activated by ATP to form Tyr-AMP and then transferred to the acceptor end of tRNA(Tyr).</text>
</comment>
<comment type="catalytic activity">
    <reaction evidence="1">
        <text>tRNA(Tyr) + L-tyrosine + ATP = L-tyrosyl-tRNA(Tyr) + AMP + diphosphate + H(+)</text>
        <dbReference type="Rhea" id="RHEA:10220"/>
        <dbReference type="Rhea" id="RHEA-COMP:9706"/>
        <dbReference type="Rhea" id="RHEA-COMP:9707"/>
        <dbReference type="ChEBI" id="CHEBI:15378"/>
        <dbReference type="ChEBI" id="CHEBI:30616"/>
        <dbReference type="ChEBI" id="CHEBI:33019"/>
        <dbReference type="ChEBI" id="CHEBI:58315"/>
        <dbReference type="ChEBI" id="CHEBI:78442"/>
        <dbReference type="ChEBI" id="CHEBI:78536"/>
        <dbReference type="ChEBI" id="CHEBI:456215"/>
        <dbReference type="EC" id="6.1.1.1"/>
    </reaction>
</comment>
<comment type="subunit">
    <text evidence="1">Homodimer.</text>
</comment>
<comment type="subcellular location">
    <subcellularLocation>
        <location evidence="1">Cytoplasm</location>
    </subcellularLocation>
</comment>
<comment type="similarity">
    <text evidence="1">Belongs to the class-I aminoacyl-tRNA synthetase family. TyrS type 2 subfamily.</text>
</comment>
<feature type="chain" id="PRO_0000236723" description="Tyrosine--tRNA ligase">
    <location>
        <begin position="1"/>
        <end position="396"/>
    </location>
</feature>
<feature type="domain" description="S4 RNA-binding" evidence="1">
    <location>
        <begin position="335"/>
        <end position="395"/>
    </location>
</feature>
<feature type="short sequence motif" description="'HIGH' region">
    <location>
        <begin position="43"/>
        <end position="52"/>
    </location>
</feature>
<feature type="short sequence motif" description="'KMSKS' region">
    <location>
        <begin position="227"/>
        <end position="231"/>
    </location>
</feature>
<feature type="binding site" evidence="1">
    <location>
        <position position="230"/>
    </location>
    <ligand>
        <name>ATP</name>
        <dbReference type="ChEBI" id="CHEBI:30616"/>
    </ligand>
</feature>
<keyword id="KW-0030">Aminoacyl-tRNA synthetase</keyword>
<keyword id="KW-0067">ATP-binding</keyword>
<keyword id="KW-0963">Cytoplasm</keyword>
<keyword id="KW-0436">Ligase</keyword>
<keyword id="KW-0547">Nucleotide-binding</keyword>
<keyword id="KW-0648">Protein biosynthesis</keyword>
<keyword id="KW-1185">Reference proteome</keyword>
<keyword id="KW-0694">RNA-binding</keyword>
<dbReference type="EC" id="6.1.1.1" evidence="1"/>
<dbReference type="EMBL" id="AE017143">
    <property type="protein sequence ID" value="AAP95611.1"/>
    <property type="molecule type" value="Genomic_DNA"/>
</dbReference>
<dbReference type="RefSeq" id="WP_010944663.1">
    <property type="nucleotide sequence ID" value="NC_002940.2"/>
</dbReference>
<dbReference type="SMR" id="Q7VN81"/>
<dbReference type="STRING" id="233412.HD_0693"/>
<dbReference type="KEGG" id="hdu:HD_0693"/>
<dbReference type="eggNOG" id="COG0162">
    <property type="taxonomic scope" value="Bacteria"/>
</dbReference>
<dbReference type="HOGENOM" id="CLU_024003_5_0_6"/>
<dbReference type="OrthoDB" id="9804243at2"/>
<dbReference type="Proteomes" id="UP000001022">
    <property type="component" value="Chromosome"/>
</dbReference>
<dbReference type="GO" id="GO:0005829">
    <property type="term" value="C:cytosol"/>
    <property type="evidence" value="ECO:0007669"/>
    <property type="project" value="TreeGrafter"/>
</dbReference>
<dbReference type="GO" id="GO:0005524">
    <property type="term" value="F:ATP binding"/>
    <property type="evidence" value="ECO:0007669"/>
    <property type="project" value="UniProtKB-UniRule"/>
</dbReference>
<dbReference type="GO" id="GO:0003723">
    <property type="term" value="F:RNA binding"/>
    <property type="evidence" value="ECO:0007669"/>
    <property type="project" value="UniProtKB-KW"/>
</dbReference>
<dbReference type="GO" id="GO:0004831">
    <property type="term" value="F:tyrosine-tRNA ligase activity"/>
    <property type="evidence" value="ECO:0007669"/>
    <property type="project" value="UniProtKB-UniRule"/>
</dbReference>
<dbReference type="GO" id="GO:0006437">
    <property type="term" value="P:tyrosyl-tRNA aminoacylation"/>
    <property type="evidence" value="ECO:0007669"/>
    <property type="project" value="UniProtKB-UniRule"/>
</dbReference>
<dbReference type="CDD" id="cd00165">
    <property type="entry name" value="S4"/>
    <property type="match status" value="1"/>
</dbReference>
<dbReference type="CDD" id="cd00805">
    <property type="entry name" value="TyrRS_core"/>
    <property type="match status" value="1"/>
</dbReference>
<dbReference type="FunFam" id="1.10.240.10:FF:000006">
    <property type="entry name" value="Tyrosine--tRNA ligase"/>
    <property type="match status" value="1"/>
</dbReference>
<dbReference type="FunFam" id="3.10.290.10:FF:000022">
    <property type="entry name" value="Tyrosine--tRNA ligase"/>
    <property type="match status" value="1"/>
</dbReference>
<dbReference type="FunFam" id="3.40.50.620:FF:000061">
    <property type="entry name" value="Tyrosine--tRNA ligase"/>
    <property type="match status" value="1"/>
</dbReference>
<dbReference type="Gene3D" id="3.40.50.620">
    <property type="entry name" value="HUPs"/>
    <property type="match status" value="1"/>
</dbReference>
<dbReference type="Gene3D" id="3.10.290.10">
    <property type="entry name" value="RNA-binding S4 domain"/>
    <property type="match status" value="1"/>
</dbReference>
<dbReference type="Gene3D" id="1.10.240.10">
    <property type="entry name" value="Tyrosyl-Transfer RNA Synthetase"/>
    <property type="match status" value="1"/>
</dbReference>
<dbReference type="HAMAP" id="MF_02007">
    <property type="entry name" value="Tyr_tRNA_synth_type2"/>
    <property type="match status" value="1"/>
</dbReference>
<dbReference type="InterPro" id="IPR001412">
    <property type="entry name" value="aa-tRNA-synth_I_CS"/>
</dbReference>
<dbReference type="InterPro" id="IPR002305">
    <property type="entry name" value="aa-tRNA-synth_Ic"/>
</dbReference>
<dbReference type="InterPro" id="IPR014729">
    <property type="entry name" value="Rossmann-like_a/b/a_fold"/>
</dbReference>
<dbReference type="InterPro" id="IPR002942">
    <property type="entry name" value="S4_RNA-bd"/>
</dbReference>
<dbReference type="InterPro" id="IPR036986">
    <property type="entry name" value="S4_RNA-bd_sf"/>
</dbReference>
<dbReference type="InterPro" id="IPR002307">
    <property type="entry name" value="Tyr-tRNA-ligase"/>
</dbReference>
<dbReference type="InterPro" id="IPR024088">
    <property type="entry name" value="Tyr-tRNA-ligase_bac-type"/>
</dbReference>
<dbReference type="InterPro" id="IPR024108">
    <property type="entry name" value="Tyr-tRNA-ligase_bac_2"/>
</dbReference>
<dbReference type="NCBIfam" id="TIGR00234">
    <property type="entry name" value="tyrS"/>
    <property type="match status" value="1"/>
</dbReference>
<dbReference type="PANTHER" id="PTHR11766:SF1">
    <property type="entry name" value="TYROSINE--TRNA LIGASE"/>
    <property type="match status" value="1"/>
</dbReference>
<dbReference type="PANTHER" id="PTHR11766">
    <property type="entry name" value="TYROSYL-TRNA SYNTHETASE"/>
    <property type="match status" value="1"/>
</dbReference>
<dbReference type="Pfam" id="PF01479">
    <property type="entry name" value="S4"/>
    <property type="match status" value="1"/>
</dbReference>
<dbReference type="Pfam" id="PF00579">
    <property type="entry name" value="tRNA-synt_1b"/>
    <property type="match status" value="1"/>
</dbReference>
<dbReference type="PRINTS" id="PR01040">
    <property type="entry name" value="TRNASYNTHTYR"/>
</dbReference>
<dbReference type="SMART" id="SM00363">
    <property type="entry name" value="S4"/>
    <property type="match status" value="1"/>
</dbReference>
<dbReference type="SUPFAM" id="SSF55174">
    <property type="entry name" value="Alpha-L RNA-binding motif"/>
    <property type="match status" value="1"/>
</dbReference>
<dbReference type="SUPFAM" id="SSF52374">
    <property type="entry name" value="Nucleotidylyl transferase"/>
    <property type="match status" value="1"/>
</dbReference>
<dbReference type="PROSITE" id="PS00178">
    <property type="entry name" value="AA_TRNA_LIGASE_I"/>
    <property type="match status" value="1"/>
</dbReference>
<dbReference type="PROSITE" id="PS50889">
    <property type="entry name" value="S4"/>
    <property type="match status" value="1"/>
</dbReference>
<name>SYY_HAEDU</name>
<evidence type="ECO:0000255" key="1">
    <source>
        <dbReference type="HAMAP-Rule" id="MF_02007"/>
    </source>
</evidence>
<sequence>MAQSIEAILAELKRGVENIYSEEDLIAKLKENRPLRIKLGADPTAPDIHLGHTVVINKLRQFQQLGHEVIFLIGDFTGMVGDPSGKNTTRPPLTREDVLRNAETYKQQLFKILDPNKTRVVFNSAWLNELGTEGMIRLTSNYTVARMLERDDFKKRFTNNQPIAIHEFIYPLLQGYDSVALQADVELGGTDQTFNLLVGRELQKSAEQKPQVAITLPLLVGLDGEKKMSKSLGNYIGVTEAPNEMFGKVMSISDELMWDWYNLLSFRPLAEITQLKADVDAGKNPRDVKILLAKEIITRFHSEAEADLAEQHFINRFQKGAIPDEMPEFCFNGEIGLATLLKEAGLVASTSEAIRSAQQGGVKIDGQKIDDVRANAQLGTFVYQVGKRKFARVTVK</sequence>
<organism>
    <name type="scientific">Haemophilus ducreyi (strain 35000HP / ATCC 700724)</name>
    <dbReference type="NCBI Taxonomy" id="233412"/>
    <lineage>
        <taxon>Bacteria</taxon>
        <taxon>Pseudomonadati</taxon>
        <taxon>Pseudomonadota</taxon>
        <taxon>Gammaproteobacteria</taxon>
        <taxon>Pasteurellales</taxon>
        <taxon>Pasteurellaceae</taxon>
        <taxon>Haemophilus</taxon>
    </lineage>
</organism>